<organism>
    <name type="scientific">Alkalilimnicola ehrlichii (strain ATCC BAA-1101 / DSM 17681 / MLHE-1)</name>
    <dbReference type="NCBI Taxonomy" id="187272"/>
    <lineage>
        <taxon>Bacteria</taxon>
        <taxon>Pseudomonadati</taxon>
        <taxon>Pseudomonadota</taxon>
        <taxon>Gammaproteobacteria</taxon>
        <taxon>Chromatiales</taxon>
        <taxon>Ectothiorhodospiraceae</taxon>
        <taxon>Alkalilimnicola</taxon>
    </lineage>
</organism>
<feature type="chain" id="PRO_1000009049" description="Phosphoheptose isomerase">
    <location>
        <begin position="1"/>
        <end position="196"/>
    </location>
</feature>
<feature type="domain" description="SIS" evidence="1">
    <location>
        <begin position="36"/>
        <end position="196"/>
    </location>
</feature>
<feature type="binding site" evidence="1">
    <location>
        <begin position="51"/>
        <end position="53"/>
    </location>
    <ligand>
        <name>substrate</name>
    </ligand>
</feature>
<feature type="binding site" evidence="1">
    <location>
        <position position="60"/>
    </location>
    <ligand>
        <name>Zn(2+)</name>
        <dbReference type="ChEBI" id="CHEBI:29105"/>
    </ligand>
</feature>
<feature type="binding site" evidence="1">
    <location>
        <position position="64"/>
    </location>
    <ligand>
        <name>substrate</name>
    </ligand>
</feature>
<feature type="binding site" evidence="1">
    <location>
        <position position="64"/>
    </location>
    <ligand>
        <name>Zn(2+)</name>
        <dbReference type="ChEBI" id="CHEBI:29105"/>
    </ligand>
</feature>
<feature type="binding site" evidence="1">
    <location>
        <begin position="93"/>
        <end position="94"/>
    </location>
    <ligand>
        <name>substrate</name>
    </ligand>
</feature>
<feature type="binding site" evidence="1">
    <location>
        <begin position="119"/>
        <end position="121"/>
    </location>
    <ligand>
        <name>substrate</name>
    </ligand>
</feature>
<feature type="binding site" evidence="1">
    <location>
        <position position="124"/>
    </location>
    <ligand>
        <name>substrate</name>
    </ligand>
</feature>
<feature type="binding site" evidence="1">
    <location>
        <position position="174"/>
    </location>
    <ligand>
        <name>substrate</name>
    </ligand>
</feature>
<feature type="binding site" evidence="1">
    <location>
        <position position="174"/>
    </location>
    <ligand>
        <name>Zn(2+)</name>
        <dbReference type="ChEBI" id="CHEBI:29105"/>
    </ligand>
</feature>
<feature type="binding site" evidence="1">
    <location>
        <position position="182"/>
    </location>
    <ligand>
        <name>Zn(2+)</name>
        <dbReference type="ChEBI" id="CHEBI:29105"/>
    </ligand>
</feature>
<comment type="function">
    <text evidence="1">Catalyzes the isomerization of sedoheptulose 7-phosphate in D-glycero-D-manno-heptose 7-phosphate.</text>
</comment>
<comment type="catalytic activity">
    <reaction evidence="1">
        <text>2 D-sedoheptulose 7-phosphate = D-glycero-alpha-D-manno-heptose 7-phosphate + D-glycero-beta-D-manno-heptose 7-phosphate</text>
        <dbReference type="Rhea" id="RHEA:27489"/>
        <dbReference type="ChEBI" id="CHEBI:57483"/>
        <dbReference type="ChEBI" id="CHEBI:60203"/>
        <dbReference type="ChEBI" id="CHEBI:60204"/>
        <dbReference type="EC" id="5.3.1.28"/>
    </reaction>
</comment>
<comment type="cofactor">
    <cofactor evidence="1">
        <name>Zn(2+)</name>
        <dbReference type="ChEBI" id="CHEBI:29105"/>
    </cofactor>
    <text evidence="1">Binds 1 zinc ion per subunit.</text>
</comment>
<comment type="pathway">
    <text evidence="1">Carbohydrate biosynthesis; D-glycero-D-manno-heptose 7-phosphate biosynthesis; D-glycero-alpha-D-manno-heptose 7-phosphate and D-glycero-beta-D-manno-heptose 7-phosphate from sedoheptulose 7-phosphate: step 1/1.</text>
</comment>
<comment type="subunit">
    <text evidence="1">Homotetramer.</text>
</comment>
<comment type="subcellular location">
    <subcellularLocation>
        <location evidence="1">Cytoplasm</location>
    </subcellularLocation>
</comment>
<comment type="miscellaneous">
    <text evidence="1">The reaction produces a racemic mixture of D-glycero-alpha-D-manno-heptose 7-phosphate and D-glycero-beta-D-manno-heptose 7-phosphate.</text>
</comment>
<comment type="similarity">
    <text evidence="1">Belongs to the SIS family. GmhA subfamily.</text>
</comment>
<reference key="1">
    <citation type="submission" date="2006-08" db="EMBL/GenBank/DDBJ databases">
        <title>Complete sequence of Alkalilimnicola ehrilichei MLHE-1.</title>
        <authorList>
            <person name="Copeland A."/>
            <person name="Lucas S."/>
            <person name="Lapidus A."/>
            <person name="Barry K."/>
            <person name="Detter J.C."/>
            <person name="Glavina del Rio T."/>
            <person name="Hammon N."/>
            <person name="Israni S."/>
            <person name="Dalin E."/>
            <person name="Tice H."/>
            <person name="Pitluck S."/>
            <person name="Sims D."/>
            <person name="Brettin T."/>
            <person name="Bruce D."/>
            <person name="Han C."/>
            <person name="Tapia R."/>
            <person name="Gilna P."/>
            <person name="Schmutz J."/>
            <person name="Larimer F."/>
            <person name="Land M."/>
            <person name="Hauser L."/>
            <person name="Kyrpides N."/>
            <person name="Mikhailova N."/>
            <person name="Oremland R.S."/>
            <person name="Hoeft S.E."/>
            <person name="Switzer-Blum J."/>
            <person name="Kulp T."/>
            <person name="King G."/>
            <person name="Tabita R."/>
            <person name="Witte B."/>
            <person name="Santini J.M."/>
            <person name="Basu P."/>
            <person name="Hollibaugh J.T."/>
            <person name="Xie G."/>
            <person name="Stolz J.F."/>
            <person name="Richardson P."/>
        </authorList>
    </citation>
    <scope>NUCLEOTIDE SEQUENCE [LARGE SCALE GENOMIC DNA]</scope>
    <source>
        <strain>ATCC BAA-1101 / DSM 17681 / MLHE-1</strain>
    </source>
</reference>
<gene>
    <name evidence="1" type="primary">gmhA</name>
    <name type="ordered locus">Mlg_2206</name>
</gene>
<dbReference type="EC" id="5.3.1.28" evidence="1"/>
<dbReference type="EMBL" id="CP000453">
    <property type="protein sequence ID" value="ABI57548.1"/>
    <property type="molecule type" value="Genomic_DNA"/>
</dbReference>
<dbReference type="RefSeq" id="WP_011629942.1">
    <property type="nucleotide sequence ID" value="NC_008340.1"/>
</dbReference>
<dbReference type="SMR" id="Q0A6I9"/>
<dbReference type="KEGG" id="aeh:Mlg_2206"/>
<dbReference type="eggNOG" id="COG0279">
    <property type="taxonomic scope" value="Bacteria"/>
</dbReference>
<dbReference type="HOGENOM" id="CLU_080999_3_1_6"/>
<dbReference type="OrthoDB" id="9810929at2"/>
<dbReference type="UniPathway" id="UPA00041">
    <property type="reaction ID" value="UER00436"/>
</dbReference>
<dbReference type="Proteomes" id="UP000001962">
    <property type="component" value="Chromosome"/>
</dbReference>
<dbReference type="GO" id="GO:0005737">
    <property type="term" value="C:cytoplasm"/>
    <property type="evidence" value="ECO:0007669"/>
    <property type="project" value="UniProtKB-SubCell"/>
</dbReference>
<dbReference type="GO" id="GO:0097367">
    <property type="term" value="F:carbohydrate derivative binding"/>
    <property type="evidence" value="ECO:0007669"/>
    <property type="project" value="InterPro"/>
</dbReference>
<dbReference type="GO" id="GO:0008968">
    <property type="term" value="F:D-sedoheptulose 7-phosphate isomerase activity"/>
    <property type="evidence" value="ECO:0007669"/>
    <property type="project" value="UniProtKB-UniRule"/>
</dbReference>
<dbReference type="GO" id="GO:0008270">
    <property type="term" value="F:zinc ion binding"/>
    <property type="evidence" value="ECO:0007669"/>
    <property type="project" value="UniProtKB-UniRule"/>
</dbReference>
<dbReference type="GO" id="GO:0005975">
    <property type="term" value="P:carbohydrate metabolic process"/>
    <property type="evidence" value="ECO:0007669"/>
    <property type="project" value="UniProtKB-UniRule"/>
</dbReference>
<dbReference type="GO" id="GO:2001061">
    <property type="term" value="P:D-glycero-D-manno-heptose 7-phosphate biosynthetic process"/>
    <property type="evidence" value="ECO:0007669"/>
    <property type="project" value="UniProtKB-UniPathway"/>
</dbReference>
<dbReference type="CDD" id="cd05006">
    <property type="entry name" value="SIS_GmhA"/>
    <property type="match status" value="1"/>
</dbReference>
<dbReference type="Gene3D" id="3.40.50.10490">
    <property type="entry name" value="Glucose-6-phosphate isomerase like protein, domain 1"/>
    <property type="match status" value="1"/>
</dbReference>
<dbReference type="HAMAP" id="MF_00067">
    <property type="entry name" value="GmhA"/>
    <property type="match status" value="1"/>
</dbReference>
<dbReference type="InterPro" id="IPR035461">
    <property type="entry name" value="GmhA/DiaA"/>
</dbReference>
<dbReference type="InterPro" id="IPR004515">
    <property type="entry name" value="Phosphoheptose_Isoase"/>
</dbReference>
<dbReference type="InterPro" id="IPR001347">
    <property type="entry name" value="SIS_dom"/>
</dbReference>
<dbReference type="InterPro" id="IPR046348">
    <property type="entry name" value="SIS_dom_sf"/>
</dbReference>
<dbReference type="InterPro" id="IPR050099">
    <property type="entry name" value="SIS_GmhA/DiaA_subfam"/>
</dbReference>
<dbReference type="NCBIfam" id="NF010546">
    <property type="entry name" value="PRK13936.1"/>
    <property type="match status" value="1"/>
</dbReference>
<dbReference type="PANTHER" id="PTHR30390:SF6">
    <property type="entry name" value="DNAA INITIATOR-ASSOCIATING PROTEIN DIAA"/>
    <property type="match status" value="1"/>
</dbReference>
<dbReference type="PANTHER" id="PTHR30390">
    <property type="entry name" value="SEDOHEPTULOSE 7-PHOSPHATE ISOMERASE / DNAA INITIATOR-ASSOCIATING FACTOR FOR REPLICATION INITIATION"/>
    <property type="match status" value="1"/>
</dbReference>
<dbReference type="Pfam" id="PF13580">
    <property type="entry name" value="SIS_2"/>
    <property type="match status" value="1"/>
</dbReference>
<dbReference type="SUPFAM" id="SSF53697">
    <property type="entry name" value="SIS domain"/>
    <property type="match status" value="1"/>
</dbReference>
<dbReference type="PROSITE" id="PS51464">
    <property type="entry name" value="SIS"/>
    <property type="match status" value="1"/>
</dbReference>
<protein>
    <recommendedName>
        <fullName evidence="1">Phosphoheptose isomerase</fullName>
        <ecNumber evidence="1">5.3.1.28</ecNumber>
    </recommendedName>
    <alternativeName>
        <fullName evidence="1">Sedoheptulose 7-phosphate isomerase</fullName>
    </alternativeName>
</protein>
<name>GMHA_ALKEH</name>
<proteinExistence type="inferred from homology"/>
<keyword id="KW-0119">Carbohydrate metabolism</keyword>
<keyword id="KW-0963">Cytoplasm</keyword>
<keyword id="KW-0413">Isomerase</keyword>
<keyword id="KW-0479">Metal-binding</keyword>
<keyword id="KW-1185">Reference proteome</keyword>
<keyword id="KW-0862">Zinc</keyword>
<accession>Q0A6I9</accession>
<evidence type="ECO:0000255" key="1">
    <source>
        <dbReference type="HAMAP-Rule" id="MF_00067"/>
    </source>
</evidence>
<sequence length="196" mass="20774">MNPHDRIVQHFHESIRTKQMAMDALTESIADAGHLMAQALQAEGKILSCGNGGSAGDAQHFSSELLNRFEMERPGLPAVALTTDSSTLTSIANDYSYQEVFAKQVRALGQAQDILLAISTSGQSGNVNAAVAAAHERGMAVVALSGKDGGEMAGLLAERDVEIRVPSDVTARIQEVHLLAIHCLCDLIDQHLFGGA</sequence>